<feature type="chain" id="PRO_1000127117" description="Small ribosomal subunit protein uS10">
    <location>
        <begin position="1"/>
        <end position="103"/>
    </location>
</feature>
<keyword id="KW-0687">Ribonucleoprotein</keyword>
<keyword id="KW-0689">Ribosomal protein</keyword>
<reference key="1">
    <citation type="journal article" date="2011" name="Proc. Natl. Acad. Sci. U.S.A.">
        <title>Genomic anatomy of Escherichia coli O157:H7 outbreaks.</title>
        <authorList>
            <person name="Eppinger M."/>
            <person name="Mammel M.K."/>
            <person name="Leclerc J.E."/>
            <person name="Ravel J."/>
            <person name="Cebula T.A."/>
        </authorList>
    </citation>
    <scope>NUCLEOTIDE SEQUENCE [LARGE SCALE GENOMIC DNA]</scope>
    <source>
        <strain>EC4115 / EHEC</strain>
    </source>
</reference>
<sequence length="103" mass="11736">MQNQRIRIRLKAFDHRLIDQATAEIVETAKRTGAQVRGPIPLPTRKERFTVLISPHVNKDARDQYEIRTHLRLVDIVEPTEKTVDALMRLDLAAGVDVQISLG</sequence>
<accession>B5YTP2</accession>
<proteinExistence type="inferred from homology"/>
<organism>
    <name type="scientific">Escherichia coli O157:H7 (strain EC4115 / EHEC)</name>
    <dbReference type="NCBI Taxonomy" id="444450"/>
    <lineage>
        <taxon>Bacteria</taxon>
        <taxon>Pseudomonadati</taxon>
        <taxon>Pseudomonadota</taxon>
        <taxon>Gammaproteobacteria</taxon>
        <taxon>Enterobacterales</taxon>
        <taxon>Enterobacteriaceae</taxon>
        <taxon>Escherichia</taxon>
    </lineage>
</organism>
<name>RS10_ECO5E</name>
<comment type="function">
    <text evidence="1">Involved in the binding of tRNA to the ribosomes.</text>
</comment>
<comment type="subunit">
    <text evidence="1">Part of the 30S ribosomal subunit.</text>
</comment>
<comment type="similarity">
    <text evidence="1">Belongs to the universal ribosomal protein uS10 family.</text>
</comment>
<dbReference type="EMBL" id="CP001164">
    <property type="protein sequence ID" value="ACI38219.1"/>
    <property type="molecule type" value="Genomic_DNA"/>
</dbReference>
<dbReference type="RefSeq" id="WP_001181004.1">
    <property type="nucleotide sequence ID" value="NC_011353.1"/>
</dbReference>
<dbReference type="SMR" id="B5YTP2"/>
<dbReference type="GeneID" id="93778666"/>
<dbReference type="KEGG" id="ecf:ECH74115_4644"/>
<dbReference type="HOGENOM" id="CLU_122625_1_3_6"/>
<dbReference type="GO" id="GO:1990904">
    <property type="term" value="C:ribonucleoprotein complex"/>
    <property type="evidence" value="ECO:0007669"/>
    <property type="project" value="UniProtKB-KW"/>
</dbReference>
<dbReference type="GO" id="GO:0005840">
    <property type="term" value="C:ribosome"/>
    <property type="evidence" value="ECO:0007669"/>
    <property type="project" value="UniProtKB-KW"/>
</dbReference>
<dbReference type="GO" id="GO:0003735">
    <property type="term" value="F:structural constituent of ribosome"/>
    <property type="evidence" value="ECO:0007669"/>
    <property type="project" value="InterPro"/>
</dbReference>
<dbReference type="GO" id="GO:0000049">
    <property type="term" value="F:tRNA binding"/>
    <property type="evidence" value="ECO:0007669"/>
    <property type="project" value="UniProtKB-UniRule"/>
</dbReference>
<dbReference type="GO" id="GO:0006412">
    <property type="term" value="P:translation"/>
    <property type="evidence" value="ECO:0007669"/>
    <property type="project" value="UniProtKB-UniRule"/>
</dbReference>
<dbReference type="FunFam" id="3.30.70.600:FF:000001">
    <property type="entry name" value="30S ribosomal protein S10"/>
    <property type="match status" value="1"/>
</dbReference>
<dbReference type="Gene3D" id="3.30.70.600">
    <property type="entry name" value="Ribosomal protein S10 domain"/>
    <property type="match status" value="1"/>
</dbReference>
<dbReference type="HAMAP" id="MF_00508">
    <property type="entry name" value="Ribosomal_uS10"/>
    <property type="match status" value="1"/>
</dbReference>
<dbReference type="InterPro" id="IPR001848">
    <property type="entry name" value="Ribosomal_uS10"/>
</dbReference>
<dbReference type="InterPro" id="IPR018268">
    <property type="entry name" value="Ribosomal_uS10_CS"/>
</dbReference>
<dbReference type="InterPro" id="IPR027486">
    <property type="entry name" value="Ribosomal_uS10_dom"/>
</dbReference>
<dbReference type="InterPro" id="IPR036838">
    <property type="entry name" value="Ribosomal_uS10_dom_sf"/>
</dbReference>
<dbReference type="NCBIfam" id="NF001861">
    <property type="entry name" value="PRK00596.1"/>
    <property type="match status" value="1"/>
</dbReference>
<dbReference type="NCBIfam" id="TIGR01049">
    <property type="entry name" value="rpsJ_bact"/>
    <property type="match status" value="1"/>
</dbReference>
<dbReference type="PANTHER" id="PTHR11700">
    <property type="entry name" value="30S RIBOSOMAL PROTEIN S10 FAMILY MEMBER"/>
    <property type="match status" value="1"/>
</dbReference>
<dbReference type="Pfam" id="PF00338">
    <property type="entry name" value="Ribosomal_S10"/>
    <property type="match status" value="1"/>
</dbReference>
<dbReference type="PRINTS" id="PR00971">
    <property type="entry name" value="RIBOSOMALS10"/>
</dbReference>
<dbReference type="SMART" id="SM01403">
    <property type="entry name" value="Ribosomal_S10"/>
    <property type="match status" value="1"/>
</dbReference>
<dbReference type="SUPFAM" id="SSF54999">
    <property type="entry name" value="Ribosomal protein S10"/>
    <property type="match status" value="1"/>
</dbReference>
<dbReference type="PROSITE" id="PS00361">
    <property type="entry name" value="RIBOSOMAL_S10"/>
    <property type="match status" value="1"/>
</dbReference>
<evidence type="ECO:0000255" key="1">
    <source>
        <dbReference type="HAMAP-Rule" id="MF_00508"/>
    </source>
</evidence>
<evidence type="ECO:0000305" key="2"/>
<gene>
    <name evidence="1" type="primary">rpsJ</name>
    <name type="ordered locus">ECH74115_4644</name>
</gene>
<protein>
    <recommendedName>
        <fullName evidence="1">Small ribosomal subunit protein uS10</fullName>
    </recommendedName>
    <alternativeName>
        <fullName evidence="2">30S ribosomal protein S10</fullName>
    </alternativeName>
</protein>